<accession>Q91DD8</accession>
<comment type="function">
    <molecule>Envelope glycoprotein</molecule>
    <text evidence="3">Trimeric GP1,2 complexes form the virion surface spikes and mediate the viral entry processes, with GP1 acting as the receptor-binding subunit and GP2 as the membrane fusion subunit. At later times of infection, down-regulates the expression of various host cell surface molecules that are essential for immune surveillance and cell adhesion. Down-modulates several integrins including ITGA1, ITGA2, ITGA3, ITGA4, ITGA5, ITGA6, ITGAV and ITGB1. This decrease in cell adhesion molecules may lead to cell detachment, contributing to the disruption of blood vessel integrity and hemorrhages developed during infection (cytotoxicity). Interacts with host TLR4 and thereby stimulates the differentiation and activation of monocytes leading to bystander death of T-lymphocytes. Down-regulates as well the function of host natural killer cells. Counteracts the antiviral effect of host BST2/tetherin that restricts release of progeny virions from infected cells. However, cooperates with VP40 and host BST2 to activate canonical NF-kappa-B pathway in a manner dependent on neddylation.</text>
</comment>
<comment type="function">
    <molecule>Shed GP</molecule>
    <text evidence="3">Functions as a decoy for anti-GP1,2 antibodies thereby contributing to viral immune evasion. Interacts and activates host macrophages and dendritic cells inducing up-regulation of cytokine transcription. This effect is mediated throught activation of host TLR4.</text>
</comment>
<comment type="function">
    <molecule>GP1</molecule>
    <text evidence="3 4 7">Responsible for binding to the receptor(s) on target cells. Interacts with CD209/DC-SIGN and CLEC4M/DC-SIGNR which act as cofactors for virus entry into dendritic cells (DCs) and endothelial cells (By similarity). Binding to the macrophage specific lectin CLEC10A also seems to enhance virus infectivity (By similarity). Interaction with FOLR1/folate receptor alpha may be a cofactor for virus entry in some cell types, although results are contradictory (By similarity). Members of the Tyro3 receptor tyrosine kinase family also seem to be cell entry factors in filovirus infection (By similarity) (PubMed:17005688). Once attached, the virions are internalized through clathrin-dependent endocytosis and/or macropinocytosis. After internalization of the virus into the endosomes of the host cell, proteolysis of GP1 by two cysteine proteases, CTSB/cathepsin B and CTSL/cathepsin L removes the glycan cap and allows GP1 binding to the host entry receptor NPC1. NPC1-binding, Ca(2+) and acidic pH induce a conformational change of GP2, which unmasks its fusion peptide and permit membranes fusion (By similarity).</text>
</comment>
<comment type="function">
    <molecule>GP2</molecule>
    <text evidence="3">Acts as a class I viral fusion protein. Under the current model, the protein has at least 3 conformational states: pre-fusion native state, pre-hairpin intermediate state, and post-fusion hairpin state. During viral and target cell membrane fusion, the coiled coil regions (heptad repeats) assume a trimer-of-hairpins structure, positioning the fusion peptide in close proximity to the C-terminal region of the ectodomain. The formation of this structure appears to drive apposition and subsequent fusion of viral and target cell membranes. Responsible for penetration of the virus into the cell cytoplasm by mediating the fusion of the membrane of the endocytosed virus particle with the endosomal membrane. Low pH in endosomes induces an irreversible conformational change in GP2, releasing the fusion hydrophobic peptide.</text>
</comment>
<comment type="subunit">
    <molecule>Envelope glycoprotein</molecule>
    <text evidence="3">Homotrimer; each monomer consists of a GP1 and a GP2 subunit linked by disulfide bonds. The resulting peplomers (GP1,2) protrude from the virus surface as spikes. Interacts with host integrin alpha-V/ITGAV. Interacts with host CLEC10A. Binds also to host CD209 and CLEC4M/DC-SIGN(R). Interacts with host FOLR1. Interacts with BST2; this interaction inhibits the antiviral effect of BST2 and this allows viral release from infected cells. Interacts with host FCN1; this interaction enhances viral entry. Interacts with host TLR4; this interaction induces cell death in T-lymphocytes or proinflammatory cytokines and SOCS1 production in monocytes.</text>
</comment>
<comment type="subunit">
    <molecule>GP1</molecule>
    <text evidence="3">Interacts with host entry receptor NPC1.</text>
</comment>
<comment type="subunit">
    <molecule>Shed GP</molecule>
    <text evidence="3">GP1 and GP2delta are part of GP1,2delta soluble complexes released by ectodomain shedding.</text>
</comment>
<comment type="subcellular location">
    <molecule>GP2</molecule>
    <subcellularLocation>
        <location evidence="3">Virion membrane</location>
        <topology evidence="5">Single-pass type I membrane protein</topology>
    </subcellularLocation>
    <subcellularLocation>
        <location evidence="3">Host cell membrane</location>
        <topology evidence="5">Single-pass type I membrane protein</topology>
    </subcellularLocation>
    <text evidence="3">In the cell, localizes to the plasma membrane lipid rafts, which probably represent the assembly and budding site.</text>
</comment>
<comment type="subcellular location">
    <molecule>GP1</molecule>
    <subcellularLocation>
        <location evidence="3">Virion membrane</location>
        <topology evidence="3">Peripheral membrane protein</topology>
    </subcellularLocation>
    <subcellularLocation>
        <location evidence="3">Host cell membrane</location>
        <topology evidence="3">Peripheral membrane protein</topology>
    </subcellularLocation>
    <text evidence="3">GP1 is not anchored to the viral envelope, but forms a disulfid-linked complex with the extravirion surface GP2. In the cell, both GP1 and GP2 localize to the plasma membrane lipid rafts, which probably represent the assembly and budding site. GP1 can also be shed after proteolytic processing.</text>
</comment>
<comment type="subcellular location">
    <molecule>Shed GP</molecule>
    <subcellularLocation>
        <location evidence="3">Secreted</location>
    </subcellularLocation>
    <text evidence="3">GP2-delta bound to GP1 (GP1,2-delta) is produced by proteolytic cleavage of GP1,2 by host ADAM17 and shed by the virus.</text>
</comment>
<comment type="domain">
    <text evidence="1">The mucin-like region seems to be involved in the cytotoxic function. This region is also involved in binding to human CLEC10A (By similarity).</text>
</comment>
<comment type="domain">
    <text evidence="1">The coiled coil regions play a role in oligomerization and fusion activity.</text>
</comment>
<comment type="PTM">
    <text evidence="1">The signal peptide region modulates GP's high mannose glycosylation, thereby determining the efficiency of the interactions with DC-SIGN(R).</text>
</comment>
<comment type="PTM">
    <text evidence="1">N-glycosylated.</text>
</comment>
<comment type="PTM">
    <text evidence="1">O-glycosylated in the mucin-like region.</text>
</comment>
<comment type="PTM">
    <text evidence="1">Palmitoylation of GP2 is not required for its function.</text>
</comment>
<comment type="PTM">
    <text evidence="1">Specific enzymatic cleavages in vivo yield mature proteins. The precursor is processed into GP1 and GP2 by host cell furin in the trans Golgi, and maybe by other host proteases, to yield the mature GP1 and GP2 proteins. The cleavage site corresponds to the furin optimal cleavage sequence [KR]-X-[KR]-R. This cleavage does not seem to be required for function. After the internalization of the virus into cell endosomes, GP1 C-terminus is removed by the endosomal proteases cathepsin B, cathepsin L, or both, leaving a 19-kDa N-terminal fragment which is further digested by cathepsin B. Proteolytic processing of GP1,2 by host ADAM17 can remove the transmembrane anchor of GP2 and leads to shedding of complexes consisting in GP1 and truncated GP2 (GP1,2delta) (By similarity).</text>
</comment>
<comment type="RNA editing">
    <location>
        <position position="296"/>
    </location>
    <text>Partially edited. RNA editing at this position consists of an insertion of one or two adenine nucleotides. The sequence displayed here is the full-length transmembrane glycoprotein GP, derived from the +1A edited RNA. The unedited RNA gives rise to the small secreted glycoprotein sGP (AC Q91DD7), the +2A edited RNA gives rise to the super small secreted glycoprotein ssGP (AC P0C770).</text>
</comment>
<comment type="miscellaneous">
    <text evidence="1">Filoviruses entry requires functional lipid rafts at the host cell surface.</text>
</comment>
<comment type="miscellaneous">
    <text>Essential for infectivity, as it is the sole viral protein expressed at the virion surface.</text>
</comment>
<comment type="similarity">
    <text evidence="8">Belongs to the filoviruses glycoprotein family.</text>
</comment>
<protein>
    <recommendedName>
        <fullName>Envelope glycoprotein</fullName>
    </recommendedName>
    <alternativeName>
        <fullName>GP1,2</fullName>
        <shortName>GP</shortName>
    </alternativeName>
    <component>
        <recommendedName>
            <fullName>GP1</fullName>
        </recommendedName>
    </component>
    <component>
        <recommendedName>
            <fullName>GP2</fullName>
        </recommendedName>
    </component>
    <component>
        <recommendedName>
            <fullName>Shed GP</fullName>
        </recommendedName>
        <alternativeName>
            <fullName>GP1,2-delta</fullName>
        </alternativeName>
    </component>
</protein>
<feature type="signal peptide" evidence="5">
    <location>
        <begin position="1"/>
        <end position="33"/>
    </location>
</feature>
<feature type="chain" id="PRO_0000245057" description="Envelope glycoprotein" evidence="1">
    <location>
        <begin position="34"/>
        <end position="677"/>
    </location>
</feature>
<feature type="chain" id="PRO_0000245058" description="GP1" evidence="1">
    <location>
        <begin position="34"/>
        <end position="502"/>
    </location>
</feature>
<feature type="chain" id="PRO_0000245059" description="GP2" evidence="1">
    <location>
        <begin position="503"/>
        <end position="677"/>
    </location>
</feature>
<feature type="chain" id="PRO_0000245060" description="Shed GP" evidence="1">
    <location>
        <begin position="503"/>
        <end position="638"/>
    </location>
</feature>
<feature type="topological domain" description="Extracellular" evidence="5">
    <location>
        <begin position="34"/>
        <end position="651"/>
    </location>
</feature>
<feature type="transmembrane region" description="Helical" evidence="5">
    <location>
        <begin position="652"/>
        <end position="672"/>
    </location>
</feature>
<feature type="topological domain" description="Cytoplasmic" evidence="5">
    <location>
        <begin position="673"/>
        <end position="677"/>
    </location>
</feature>
<feature type="region of interest" description="Receptor-binding" evidence="1">
    <location>
        <begin position="55"/>
        <end position="202"/>
    </location>
</feature>
<feature type="region of interest" description="Mucin-like region" evidence="1">
    <location>
        <begin position="306"/>
        <end position="486"/>
    </location>
</feature>
<feature type="region of interest" description="Disordered" evidence="6">
    <location>
        <begin position="315"/>
        <end position="349"/>
    </location>
</feature>
<feature type="region of interest" description="Disordered" evidence="6">
    <location>
        <begin position="370"/>
        <end position="483"/>
    </location>
</feature>
<feature type="region of interest" description="Disordered" evidence="6">
    <location>
        <begin position="489"/>
        <end position="508"/>
    </location>
</feature>
<feature type="region of interest" description="Fusion peptide" evidence="1">
    <location>
        <begin position="525"/>
        <end position="540"/>
    </location>
</feature>
<feature type="coiled-coil region" evidence="5">
    <location>
        <begin position="555"/>
        <end position="596"/>
    </location>
</feature>
<feature type="coiled-coil region" evidence="5">
    <location>
        <begin position="616"/>
        <end position="635"/>
    </location>
</feature>
<feature type="compositionally biased region" description="Polar residues" evidence="6">
    <location>
        <begin position="315"/>
        <end position="326"/>
    </location>
</feature>
<feature type="compositionally biased region" description="Polar residues" evidence="6">
    <location>
        <begin position="370"/>
        <end position="421"/>
    </location>
</feature>
<feature type="compositionally biased region" description="Polar residues" evidence="6">
    <location>
        <begin position="428"/>
        <end position="445"/>
    </location>
</feature>
<feature type="compositionally biased region" description="Polar residues" evidence="6">
    <location>
        <begin position="458"/>
        <end position="472"/>
    </location>
</feature>
<feature type="site" description="Involved in receptor recognition and/or post-binding events" evidence="5">
    <location>
        <position position="58"/>
    </location>
</feature>
<feature type="site" description="Involved in receptor recognition and/or post-binding events" evidence="5">
    <location>
        <position position="64"/>
    </location>
</feature>
<feature type="site" description="Involved in receptor recognition and/or post-binding events" evidence="5">
    <location>
        <position position="89"/>
    </location>
</feature>
<feature type="site" description="Involved in receptor recognition and/or post-binding events" evidence="5">
    <location>
        <position position="96"/>
    </location>
</feature>
<feature type="site" description="Involved in receptor recognition and/or post-binding events" evidence="5">
    <location>
        <position position="171"/>
    </location>
</feature>
<feature type="site" description="Cleavage; by host furin" evidence="1">
    <location>
        <begin position="502"/>
        <end position="503"/>
    </location>
</feature>
<feature type="site" description="Cleavage; by host ADAM17" evidence="1">
    <location>
        <begin position="638"/>
        <end position="639"/>
    </location>
</feature>
<feature type="lipid moiety-binding region" description="S-palmitoyl cysteine; by host" evidence="3">
    <location>
        <position position="671"/>
    </location>
</feature>
<feature type="lipid moiety-binding region" description="S-palmitoyl cysteine; by host" evidence="3">
    <location>
        <position position="673"/>
    </location>
</feature>
<feature type="glycosylation site" description="N-linked (GlcNAc...) asparagine; by host" evidence="5">
    <location>
        <position position="41"/>
    </location>
</feature>
<feature type="glycosylation site" description="N-linked (GlcNAc...) asparagine; by host" evidence="5">
    <location>
        <position position="205"/>
    </location>
</feature>
<feature type="glycosylation site" description="N-linked (GlcNAc...) asparagine; by host" evidence="5">
    <location>
        <position position="239"/>
    </location>
</feature>
<feature type="glycosylation site" description="N-linked (GlcNAc...) asparagine; by host" evidence="5">
    <location>
        <position position="258"/>
    </location>
</feature>
<feature type="glycosylation site" description="N-linked (GlcNAc...) asparagine; by host" evidence="5">
    <location>
        <position position="269"/>
    </location>
</feature>
<feature type="glycosylation site" description="N-linked (GlcNAc...) asparagine; by host" evidence="5">
    <location>
        <position position="297"/>
    </location>
</feature>
<feature type="glycosylation site" description="N-linked (GlcNAc...) asparagine; by host" evidence="5">
    <location>
        <position position="317"/>
    </location>
</feature>
<feature type="glycosylation site" description="N-linked (GlcNAc...) asparagine; by host" evidence="5">
    <location>
        <position position="318"/>
    </location>
</feature>
<feature type="glycosylation site" description="N-linked (GlcNAc...) asparagine; by host" evidence="5">
    <location>
        <position position="339"/>
    </location>
</feature>
<feature type="glycosylation site" description="N-linked (GlcNAc...) asparagine; by host" evidence="5">
    <location>
        <position position="406"/>
    </location>
</feature>
<feature type="glycosylation site" description="N-linked (GlcNAc...) asparagine; by host" evidence="5">
    <location>
        <position position="420"/>
    </location>
</feature>
<feature type="glycosylation site" description="N-linked (GlcNAc...) asparagine; by host" evidence="5">
    <location>
        <position position="435"/>
    </location>
</feature>
<feature type="glycosylation site" description="N-linked (GlcNAc...) asparagine; by host" evidence="5">
    <location>
        <position position="463"/>
    </location>
</feature>
<feature type="glycosylation site" description="N-linked (GlcNAc...) asparagine; by host" evidence="5">
    <location>
        <position position="564"/>
    </location>
</feature>
<feature type="glycosylation site" description="N-linked (GlcNAc...) asparagine; by host" evidence="5">
    <location>
        <position position="619"/>
    </location>
</feature>
<feature type="disulfide bond" description="Interchain (between GP1 and GP2 chains)" evidence="1">
    <location>
        <begin position="54"/>
        <end position="610"/>
    </location>
</feature>
<feature type="disulfide bond" evidence="5">
    <location>
        <begin position="109"/>
        <end position="136"/>
    </location>
</feature>
<feature type="disulfide bond" evidence="5">
    <location>
        <begin position="122"/>
        <end position="148"/>
    </location>
</feature>
<feature type="disulfide bond" evidence="5">
    <location>
        <begin position="512"/>
        <end position="557"/>
    </location>
</feature>
<feature type="disulfide bond" evidence="2">
    <location>
        <begin position="602"/>
        <end position="609"/>
    </location>
</feature>
<organism>
    <name type="scientific">Reston ebolavirus (strain Philippines-96)</name>
    <name type="common">REBOV</name>
    <name type="synonym">Reston Ebola virus</name>
    <dbReference type="NCBI Taxonomy" id="129003"/>
    <lineage>
        <taxon>Viruses</taxon>
        <taxon>Riboviria</taxon>
        <taxon>Orthornavirae</taxon>
        <taxon>Negarnaviricota</taxon>
        <taxon>Haploviricotina</taxon>
        <taxon>Monjiviricetes</taxon>
        <taxon>Mononegavirales</taxon>
        <taxon>Filoviridae</taxon>
        <taxon>Orthoebolavirus</taxon>
        <taxon>Orthoebolavirus restonense</taxon>
        <taxon>Reston ebolavirus</taxon>
    </lineage>
</organism>
<proteinExistence type="inferred from homology"/>
<dbReference type="EMBL" id="AB050936">
    <property type="protein sequence ID" value="BAB69006.1"/>
    <property type="molecule type" value="Genomic_RNA"/>
</dbReference>
<dbReference type="SMR" id="Q91DD8"/>
<dbReference type="GlyCosmos" id="Q91DD8">
    <property type="glycosylation" value="15 sites, No reported glycans"/>
</dbReference>
<dbReference type="Proteomes" id="UP000002322">
    <property type="component" value="Genome"/>
</dbReference>
<dbReference type="GO" id="GO:0005576">
    <property type="term" value="C:extracellular region"/>
    <property type="evidence" value="ECO:0007669"/>
    <property type="project" value="UniProtKB-SubCell"/>
</dbReference>
<dbReference type="GO" id="GO:0020002">
    <property type="term" value="C:host cell plasma membrane"/>
    <property type="evidence" value="ECO:0007669"/>
    <property type="project" value="UniProtKB-SubCell"/>
</dbReference>
<dbReference type="GO" id="GO:0016020">
    <property type="term" value="C:membrane"/>
    <property type="evidence" value="ECO:0007669"/>
    <property type="project" value="UniProtKB-KW"/>
</dbReference>
<dbReference type="GO" id="GO:0019031">
    <property type="term" value="C:viral envelope"/>
    <property type="evidence" value="ECO:0007669"/>
    <property type="project" value="UniProtKB-KW"/>
</dbReference>
<dbReference type="GO" id="GO:0055036">
    <property type="term" value="C:virion membrane"/>
    <property type="evidence" value="ECO:0007669"/>
    <property type="project" value="UniProtKB-SubCell"/>
</dbReference>
<dbReference type="GO" id="GO:0075512">
    <property type="term" value="P:clathrin-dependent endocytosis of virus by host cell"/>
    <property type="evidence" value="ECO:0007669"/>
    <property type="project" value="UniProtKB-KW"/>
</dbReference>
<dbReference type="GO" id="GO:0098670">
    <property type="term" value="P:entry receptor-mediated virion attachment to host cell"/>
    <property type="evidence" value="ECO:0007669"/>
    <property type="project" value="UniProtKB-KW"/>
</dbReference>
<dbReference type="GO" id="GO:0039654">
    <property type="term" value="P:fusion of virus membrane with host endosome membrane"/>
    <property type="evidence" value="ECO:0007669"/>
    <property type="project" value="UniProtKB-KW"/>
</dbReference>
<dbReference type="GO" id="GO:0052170">
    <property type="term" value="P:symbiont-mediated suppression of host innate immune response"/>
    <property type="evidence" value="ECO:0007669"/>
    <property type="project" value="UniProtKB-KW"/>
</dbReference>
<dbReference type="GO" id="GO:0039587">
    <property type="term" value="P:symbiont-mediated-mediated suppression of host tetherin activity"/>
    <property type="evidence" value="ECO:0007669"/>
    <property type="project" value="UniProtKB-KW"/>
</dbReference>
<dbReference type="CDD" id="cd09850">
    <property type="entry name" value="Ebola-like_HR1-HR2"/>
    <property type="match status" value="1"/>
</dbReference>
<dbReference type="Gene3D" id="1.10.287.210">
    <property type="match status" value="1"/>
</dbReference>
<dbReference type="InterPro" id="IPR054584">
    <property type="entry name" value="Ebola-like_HR1-HR2"/>
</dbReference>
<dbReference type="InterPro" id="IPR014625">
    <property type="entry name" value="GPC_FiloV"/>
</dbReference>
<dbReference type="InterPro" id="IPR002561">
    <property type="entry name" value="GPC_filovir-type_extra_dom"/>
</dbReference>
<dbReference type="Pfam" id="PF22307">
    <property type="entry name" value="Ebola-like_HR1-HR2"/>
    <property type="match status" value="1"/>
</dbReference>
<dbReference type="Pfam" id="PF01611">
    <property type="entry name" value="Filo_glycop"/>
    <property type="match status" value="1"/>
</dbReference>
<dbReference type="PIRSF" id="PIRSF036874">
    <property type="entry name" value="GPC_FiloV"/>
    <property type="match status" value="1"/>
</dbReference>
<dbReference type="SUPFAM" id="SSF58069">
    <property type="entry name" value="Virus ectodomain"/>
    <property type="match status" value="1"/>
</dbReference>
<reference key="1">
    <citation type="journal article" date="2001" name="Arch. Virol.">
        <title>Genome structure of Ebola virus subtype Reston: differences among Ebola subtypes.</title>
        <authorList>
            <person name="Ikegami T."/>
            <person name="Calaor A.B."/>
            <person name="Miranda M.E."/>
            <person name="Niikura M."/>
            <person name="Saijo M."/>
            <person name="Kurane I."/>
            <person name="Yoshikawa Y."/>
            <person name="Morikawa S."/>
        </authorList>
    </citation>
    <scope>NUCLEOTIDE SEQUENCE [GENOMIC RNA]</scope>
</reference>
<reference key="2">
    <citation type="journal article" date="2006" name="J. Virol.">
        <title>Tyro3 family-mediated cell entry of Ebola and Marburg viruses.</title>
        <authorList>
            <person name="Shimojima M."/>
            <person name="Takada A."/>
            <person name="Ebihara H."/>
            <person name="Neumann G."/>
            <person name="Fujioka K."/>
            <person name="Irimura T."/>
            <person name="Jones S."/>
            <person name="Feldmann H."/>
            <person name="Kawaoka Y."/>
        </authorList>
    </citation>
    <scope>FUNCTION (GP1)</scope>
</reference>
<sequence length="677" mass="74330">MGSGYQLLQLPRERFRKTSFLVWVIILFQRAISMPLGIVTNSTLKATEIDQLVCRDKLSSTSQLKSVGLNLEGNGIATDVPSATKRWGFRSGVPPKVVSYEAGEWAENCYNLEIKKSDGSECLPLPPDGVRGFPRCRYVHKVQGTGPCPGDLAFHKNGAFFLYDRLASTVIYRGTTFAEGVIAFLILSEPKKHFWKATPAHEPVNTTDDSTSYYMTLTLSYEMSNFGGEESNTLFKVDNHTYVQLDRPHTPQFLVQLNETLRRNNRLSNSTGRLTWTVDPKIEPDVGEWAFWETKKNFSQQLHGENLHFQILSTHTNNSSDQSPAGTVQGKISYHPPTNNSELVPTDSPPVVSVLTAGRTEEMSTQGLTNGETITGFTANPMTTTIAPSPTMTSEVDNNVPSEQPNNTASIEDSPPSASNETIDHSEMNSIQGSNNSAQSPQTKATPAPTASPMTLDPQETANISKPGTSPGSAAGPSQPGLTINTISKVADSLSPTRKQKRSVRQNTANKCNPDLHYWTAVDEGAAAGLAWIPYFGPAAEGIYIEGVMHNQNGLICGLRQLANETTQALQLFLRATTELRTYSLLNRKAIDFLLQRWGGTCRILGPSCCIEPHDWTKNITDEINQIKHDFIDNPLPDHGDDLNLWTGWRQWIPAGIGIIGVIIAIIALLCICKILC</sequence>
<organismHost>
    <name type="scientific">Homo sapiens</name>
    <name type="common">Human</name>
    <dbReference type="NCBI Taxonomy" id="9606"/>
</organismHost>
<organismHost>
    <name type="scientific">Macaca fascicularis</name>
    <name type="common">Crab-eating macaque</name>
    <name type="synonym">Cynomolgus monkey</name>
    <dbReference type="NCBI Taxonomy" id="9541"/>
</organismHost>
<organismHost>
    <name type="scientific">Pteropodinae</name>
    <dbReference type="NCBI Taxonomy" id="77225"/>
</organismHost>
<organismHost>
    <name type="scientific">Sus scrofa</name>
    <name type="common">Pig</name>
    <dbReference type="NCBI Taxonomy" id="9823"/>
</organismHost>
<evidence type="ECO:0000250" key="1"/>
<evidence type="ECO:0000250" key="2">
    <source>
        <dbReference type="UniProtKB" id="O11457"/>
    </source>
</evidence>
<evidence type="ECO:0000250" key="3">
    <source>
        <dbReference type="UniProtKB" id="Q05320"/>
    </source>
</evidence>
<evidence type="ECO:0000250" key="4">
    <source>
        <dbReference type="UniProtKB" id="Q66814"/>
    </source>
</evidence>
<evidence type="ECO:0000255" key="5"/>
<evidence type="ECO:0000256" key="6">
    <source>
        <dbReference type="SAM" id="MobiDB-lite"/>
    </source>
</evidence>
<evidence type="ECO:0000269" key="7">
    <source>
    </source>
</evidence>
<evidence type="ECO:0000305" key="8"/>
<name>VGP_EBORE</name>
<keyword id="KW-1165">Clathrin-mediated endocytosis of virus by host</keyword>
<keyword id="KW-0165">Cleavage on pair of basic residues</keyword>
<keyword id="KW-0175">Coiled coil</keyword>
<keyword id="KW-1015">Disulfide bond</keyword>
<keyword id="KW-1170">Fusion of virus membrane with host endosomal membrane</keyword>
<keyword id="KW-1168">Fusion of virus membrane with host membrane</keyword>
<keyword id="KW-0325">Glycoprotein</keyword>
<keyword id="KW-1032">Host cell membrane</keyword>
<keyword id="KW-1043">Host membrane</keyword>
<keyword id="KW-0945">Host-virus interaction</keyword>
<keyword id="KW-1090">Inhibition of host innate immune response by virus</keyword>
<keyword id="KW-1084">Inhibition of host tetherin by virus</keyword>
<keyword id="KW-0449">Lipoprotein</keyword>
<keyword id="KW-0472">Membrane</keyword>
<keyword id="KW-0564">Palmitate</keyword>
<keyword id="KW-0691">RNA editing</keyword>
<keyword id="KW-0964">Secreted</keyword>
<keyword id="KW-0732">Signal</keyword>
<keyword id="KW-0812">Transmembrane</keyword>
<keyword id="KW-1133">Transmembrane helix</keyword>
<keyword id="KW-1161">Viral attachment to host cell</keyword>
<keyword id="KW-1234">Viral attachment to host entry receptor</keyword>
<keyword id="KW-0261">Viral envelope protein</keyword>
<keyword id="KW-0899">Viral immunoevasion</keyword>
<keyword id="KW-1162">Viral penetration into host cytoplasm</keyword>
<keyword id="KW-0946">Virion</keyword>
<keyword id="KW-1164">Virus endocytosis by host</keyword>
<keyword id="KW-1160">Virus entry into host cell</keyword>
<gene>
    <name type="primary">GP</name>
</gene>